<protein>
    <recommendedName>
        <fullName evidence="1">Large ribosomal subunit protein bL34</fullName>
    </recommendedName>
    <alternativeName>
        <fullName evidence="3">50S ribosomal protein L34</fullName>
    </alternativeName>
</protein>
<gene>
    <name evidence="1" type="primary">rpmH</name>
    <name type="ordered locus">SaurJH1_2793</name>
</gene>
<evidence type="ECO:0000255" key="1">
    <source>
        <dbReference type="HAMAP-Rule" id="MF_00391"/>
    </source>
</evidence>
<evidence type="ECO:0000256" key="2">
    <source>
        <dbReference type="SAM" id="MobiDB-lite"/>
    </source>
</evidence>
<evidence type="ECO:0000305" key="3"/>
<reference key="1">
    <citation type="submission" date="2007-06" db="EMBL/GenBank/DDBJ databases">
        <title>Complete sequence of chromosome of Staphylococcus aureus subsp. aureus JH1.</title>
        <authorList>
            <consortium name="US DOE Joint Genome Institute"/>
            <person name="Copeland A."/>
            <person name="Lucas S."/>
            <person name="Lapidus A."/>
            <person name="Barry K."/>
            <person name="Detter J.C."/>
            <person name="Glavina del Rio T."/>
            <person name="Hammon N."/>
            <person name="Israni S."/>
            <person name="Dalin E."/>
            <person name="Tice H."/>
            <person name="Pitluck S."/>
            <person name="Chain P."/>
            <person name="Malfatti S."/>
            <person name="Shin M."/>
            <person name="Vergez L."/>
            <person name="Schmutz J."/>
            <person name="Larimer F."/>
            <person name="Land M."/>
            <person name="Hauser L."/>
            <person name="Kyrpides N."/>
            <person name="Ivanova N."/>
            <person name="Tomasz A."/>
            <person name="Richardson P."/>
        </authorList>
    </citation>
    <scope>NUCLEOTIDE SEQUENCE [LARGE SCALE GENOMIC DNA]</scope>
    <source>
        <strain>JH1</strain>
    </source>
</reference>
<comment type="similarity">
    <text evidence="1">Belongs to the bacterial ribosomal protein bL34 family.</text>
</comment>
<organism>
    <name type="scientific">Staphylococcus aureus (strain JH1)</name>
    <dbReference type="NCBI Taxonomy" id="359787"/>
    <lineage>
        <taxon>Bacteria</taxon>
        <taxon>Bacillati</taxon>
        <taxon>Bacillota</taxon>
        <taxon>Bacilli</taxon>
        <taxon>Bacillales</taxon>
        <taxon>Staphylococcaceae</taxon>
        <taxon>Staphylococcus</taxon>
    </lineage>
</organism>
<dbReference type="EMBL" id="CP000736">
    <property type="protein sequence ID" value="ABR53615.1"/>
    <property type="molecule type" value="Genomic_DNA"/>
</dbReference>
<dbReference type="SMR" id="A6U597"/>
<dbReference type="KEGG" id="sah:SaurJH1_2793"/>
<dbReference type="HOGENOM" id="CLU_129938_2_0_9"/>
<dbReference type="GO" id="GO:1990904">
    <property type="term" value="C:ribonucleoprotein complex"/>
    <property type="evidence" value="ECO:0007669"/>
    <property type="project" value="UniProtKB-KW"/>
</dbReference>
<dbReference type="GO" id="GO:0005840">
    <property type="term" value="C:ribosome"/>
    <property type="evidence" value="ECO:0007669"/>
    <property type="project" value="UniProtKB-KW"/>
</dbReference>
<dbReference type="GO" id="GO:0003735">
    <property type="term" value="F:structural constituent of ribosome"/>
    <property type="evidence" value="ECO:0007669"/>
    <property type="project" value="InterPro"/>
</dbReference>
<dbReference type="GO" id="GO:0006412">
    <property type="term" value="P:translation"/>
    <property type="evidence" value="ECO:0007669"/>
    <property type="project" value="UniProtKB-UniRule"/>
</dbReference>
<dbReference type="FunFam" id="1.10.287.3980:FF:000001">
    <property type="entry name" value="Mitochondrial ribosomal protein L34"/>
    <property type="match status" value="1"/>
</dbReference>
<dbReference type="Gene3D" id="1.10.287.3980">
    <property type="match status" value="1"/>
</dbReference>
<dbReference type="HAMAP" id="MF_00391">
    <property type="entry name" value="Ribosomal_bL34"/>
    <property type="match status" value="1"/>
</dbReference>
<dbReference type="InterPro" id="IPR000271">
    <property type="entry name" value="Ribosomal_bL34"/>
</dbReference>
<dbReference type="InterPro" id="IPR020939">
    <property type="entry name" value="Ribosomal_bL34_CS"/>
</dbReference>
<dbReference type="NCBIfam" id="TIGR01030">
    <property type="entry name" value="rpmH_bact"/>
    <property type="match status" value="1"/>
</dbReference>
<dbReference type="PANTHER" id="PTHR14503:SF4">
    <property type="entry name" value="LARGE RIBOSOMAL SUBUNIT PROTEIN BL34M"/>
    <property type="match status" value="1"/>
</dbReference>
<dbReference type="PANTHER" id="PTHR14503">
    <property type="entry name" value="MITOCHONDRIAL RIBOSOMAL PROTEIN 34 FAMILY MEMBER"/>
    <property type="match status" value="1"/>
</dbReference>
<dbReference type="Pfam" id="PF00468">
    <property type="entry name" value="Ribosomal_L34"/>
    <property type="match status" value="1"/>
</dbReference>
<dbReference type="PROSITE" id="PS00784">
    <property type="entry name" value="RIBOSOMAL_L34"/>
    <property type="match status" value="1"/>
</dbReference>
<proteinExistence type="inferred from homology"/>
<accession>A6U597</accession>
<name>RL34_STAA2</name>
<keyword id="KW-0687">Ribonucleoprotein</keyword>
<keyword id="KW-0689">Ribosomal protein</keyword>
<sequence length="45" mass="5434">MVKRTYQPNKRKHSKVHGFRKRMSTKNGRKVLARRRRKGRKVLSA</sequence>
<feature type="chain" id="PRO_1000080272" description="Large ribosomal subunit protein bL34">
    <location>
        <begin position="1"/>
        <end position="45"/>
    </location>
</feature>
<feature type="region of interest" description="Disordered" evidence="2">
    <location>
        <begin position="1"/>
        <end position="45"/>
    </location>
</feature>